<proteinExistence type="inferred from homology"/>
<name>RL28_PELPB</name>
<reference key="1">
    <citation type="submission" date="2008-06" db="EMBL/GenBank/DDBJ databases">
        <title>Complete sequence of Pelodictyon phaeoclathratiforme BU-1.</title>
        <authorList>
            <consortium name="US DOE Joint Genome Institute"/>
            <person name="Lucas S."/>
            <person name="Copeland A."/>
            <person name="Lapidus A."/>
            <person name="Glavina del Rio T."/>
            <person name="Dalin E."/>
            <person name="Tice H."/>
            <person name="Bruce D."/>
            <person name="Goodwin L."/>
            <person name="Pitluck S."/>
            <person name="Schmutz J."/>
            <person name="Larimer F."/>
            <person name="Land M."/>
            <person name="Hauser L."/>
            <person name="Kyrpides N."/>
            <person name="Mikhailova N."/>
            <person name="Liu Z."/>
            <person name="Li T."/>
            <person name="Zhao F."/>
            <person name="Overmann J."/>
            <person name="Bryant D.A."/>
            <person name="Richardson P."/>
        </authorList>
    </citation>
    <scope>NUCLEOTIDE SEQUENCE [LARGE SCALE GENOMIC DNA]</scope>
    <source>
        <strain>DSM 5477 / BU-1</strain>
    </source>
</reference>
<protein>
    <recommendedName>
        <fullName evidence="1">Large ribosomal subunit protein bL28</fullName>
    </recommendedName>
    <alternativeName>
        <fullName evidence="2">50S ribosomal protein L28</fullName>
    </alternativeName>
</protein>
<keyword id="KW-1185">Reference proteome</keyword>
<keyword id="KW-0687">Ribonucleoprotein</keyword>
<keyword id="KW-0689">Ribosomal protein</keyword>
<comment type="similarity">
    <text evidence="1">Belongs to the bacterial ribosomal protein bL28 family.</text>
</comment>
<gene>
    <name evidence="1" type="primary">rpmB</name>
    <name type="ordered locus">Ppha_0707</name>
</gene>
<sequence>MSKVCLLTGKRPIYGNTVSHANNHVRTRFEPNLHTKRIWIEEEKRFVKVKLSAKAMTIIAKTGTATLAKLLK</sequence>
<evidence type="ECO:0000255" key="1">
    <source>
        <dbReference type="HAMAP-Rule" id="MF_00373"/>
    </source>
</evidence>
<evidence type="ECO:0000305" key="2"/>
<organism>
    <name type="scientific">Pelodictyon phaeoclathratiforme (strain DSM 5477 / BU-1)</name>
    <dbReference type="NCBI Taxonomy" id="324925"/>
    <lineage>
        <taxon>Bacteria</taxon>
        <taxon>Pseudomonadati</taxon>
        <taxon>Chlorobiota</taxon>
        <taxon>Chlorobiia</taxon>
        <taxon>Chlorobiales</taxon>
        <taxon>Chlorobiaceae</taxon>
        <taxon>Chlorobium/Pelodictyon group</taxon>
        <taxon>Pelodictyon</taxon>
    </lineage>
</organism>
<dbReference type="EMBL" id="CP001110">
    <property type="protein sequence ID" value="ACF43002.1"/>
    <property type="molecule type" value="Genomic_DNA"/>
</dbReference>
<dbReference type="RefSeq" id="WP_012507497.1">
    <property type="nucleotide sequence ID" value="NC_011060.1"/>
</dbReference>
<dbReference type="SMR" id="B4SE11"/>
<dbReference type="STRING" id="324925.Ppha_0707"/>
<dbReference type="KEGG" id="pph:Ppha_0707"/>
<dbReference type="eggNOG" id="COG0227">
    <property type="taxonomic scope" value="Bacteria"/>
</dbReference>
<dbReference type="HOGENOM" id="CLU_064548_3_1_10"/>
<dbReference type="OrthoDB" id="9805609at2"/>
<dbReference type="Proteomes" id="UP000002724">
    <property type="component" value="Chromosome"/>
</dbReference>
<dbReference type="GO" id="GO:1990904">
    <property type="term" value="C:ribonucleoprotein complex"/>
    <property type="evidence" value="ECO:0007669"/>
    <property type="project" value="UniProtKB-KW"/>
</dbReference>
<dbReference type="GO" id="GO:0005840">
    <property type="term" value="C:ribosome"/>
    <property type="evidence" value="ECO:0007669"/>
    <property type="project" value="UniProtKB-KW"/>
</dbReference>
<dbReference type="GO" id="GO:0003735">
    <property type="term" value="F:structural constituent of ribosome"/>
    <property type="evidence" value="ECO:0007669"/>
    <property type="project" value="InterPro"/>
</dbReference>
<dbReference type="GO" id="GO:0006412">
    <property type="term" value="P:translation"/>
    <property type="evidence" value="ECO:0007669"/>
    <property type="project" value="UniProtKB-UniRule"/>
</dbReference>
<dbReference type="FunFam" id="2.30.170.40:FF:000001">
    <property type="entry name" value="50S ribosomal protein L28"/>
    <property type="match status" value="1"/>
</dbReference>
<dbReference type="Gene3D" id="2.30.170.40">
    <property type="entry name" value="Ribosomal protein L28/L24"/>
    <property type="match status" value="1"/>
</dbReference>
<dbReference type="HAMAP" id="MF_00373">
    <property type="entry name" value="Ribosomal_bL28"/>
    <property type="match status" value="1"/>
</dbReference>
<dbReference type="InterPro" id="IPR026569">
    <property type="entry name" value="Ribosomal_bL28"/>
</dbReference>
<dbReference type="InterPro" id="IPR034704">
    <property type="entry name" value="Ribosomal_bL28/bL31-like_sf"/>
</dbReference>
<dbReference type="InterPro" id="IPR001383">
    <property type="entry name" value="Ribosomal_bL28_bact-type"/>
</dbReference>
<dbReference type="InterPro" id="IPR037147">
    <property type="entry name" value="Ribosomal_bL28_sf"/>
</dbReference>
<dbReference type="NCBIfam" id="TIGR00009">
    <property type="entry name" value="L28"/>
    <property type="match status" value="1"/>
</dbReference>
<dbReference type="PANTHER" id="PTHR13528">
    <property type="entry name" value="39S RIBOSOMAL PROTEIN L28, MITOCHONDRIAL"/>
    <property type="match status" value="1"/>
</dbReference>
<dbReference type="PANTHER" id="PTHR13528:SF2">
    <property type="entry name" value="LARGE RIBOSOMAL SUBUNIT PROTEIN BL28M"/>
    <property type="match status" value="1"/>
</dbReference>
<dbReference type="Pfam" id="PF00830">
    <property type="entry name" value="Ribosomal_L28"/>
    <property type="match status" value="1"/>
</dbReference>
<dbReference type="SUPFAM" id="SSF143800">
    <property type="entry name" value="L28p-like"/>
    <property type="match status" value="1"/>
</dbReference>
<feature type="chain" id="PRO_1000121666" description="Large ribosomal subunit protein bL28">
    <location>
        <begin position="1"/>
        <end position="72"/>
    </location>
</feature>
<accession>B4SE11</accession>